<comment type="catalytic activity">
    <reaction evidence="1">
        <text>L-histidine = trans-urocanate + NH4(+)</text>
        <dbReference type="Rhea" id="RHEA:21232"/>
        <dbReference type="ChEBI" id="CHEBI:17771"/>
        <dbReference type="ChEBI" id="CHEBI:28938"/>
        <dbReference type="ChEBI" id="CHEBI:57595"/>
        <dbReference type="EC" id="4.3.1.3"/>
    </reaction>
</comment>
<comment type="pathway">
    <text evidence="1">Amino-acid degradation; L-histidine degradation into L-glutamate; N-formimidoyl-L-glutamate from L-histidine: step 1/3.</text>
</comment>
<comment type="subcellular location">
    <subcellularLocation>
        <location evidence="1">Cytoplasm</location>
    </subcellularLocation>
</comment>
<comment type="PTM">
    <text evidence="1">Contains an active site 4-methylidene-imidazol-5-one (MIO), which is formed autocatalytically by cyclization and dehydration of residues Ala-Ser-Gly.</text>
</comment>
<comment type="similarity">
    <text evidence="1">Belongs to the PAL/histidase family.</text>
</comment>
<evidence type="ECO:0000255" key="1">
    <source>
        <dbReference type="HAMAP-Rule" id="MF_00229"/>
    </source>
</evidence>
<gene>
    <name evidence="1" type="primary">hutH</name>
    <name type="ordered locus">Pden_0711</name>
</gene>
<dbReference type="EC" id="4.3.1.3" evidence="1"/>
<dbReference type="EMBL" id="CP000489">
    <property type="protein sequence ID" value="ABL68823.1"/>
    <property type="molecule type" value="Genomic_DNA"/>
</dbReference>
<dbReference type="SMR" id="A1AZX9"/>
<dbReference type="STRING" id="318586.Pden_0711"/>
<dbReference type="EnsemblBacteria" id="ABL68823">
    <property type="protein sequence ID" value="ABL68823"/>
    <property type="gene ID" value="Pden_0711"/>
</dbReference>
<dbReference type="KEGG" id="pde:Pden_0711"/>
<dbReference type="eggNOG" id="COG2986">
    <property type="taxonomic scope" value="Bacteria"/>
</dbReference>
<dbReference type="HOGENOM" id="CLU_014801_4_0_5"/>
<dbReference type="OrthoDB" id="9806955at2"/>
<dbReference type="UniPathway" id="UPA00379">
    <property type="reaction ID" value="UER00549"/>
</dbReference>
<dbReference type="Proteomes" id="UP000000361">
    <property type="component" value="Chromosome 1"/>
</dbReference>
<dbReference type="GO" id="GO:0005737">
    <property type="term" value="C:cytoplasm"/>
    <property type="evidence" value="ECO:0007669"/>
    <property type="project" value="UniProtKB-SubCell"/>
</dbReference>
<dbReference type="GO" id="GO:0004397">
    <property type="term" value="F:histidine ammonia-lyase activity"/>
    <property type="evidence" value="ECO:0007669"/>
    <property type="project" value="UniProtKB-UniRule"/>
</dbReference>
<dbReference type="GO" id="GO:0019556">
    <property type="term" value="P:L-histidine catabolic process to glutamate and formamide"/>
    <property type="evidence" value="ECO:0007669"/>
    <property type="project" value="UniProtKB-UniPathway"/>
</dbReference>
<dbReference type="GO" id="GO:0019557">
    <property type="term" value="P:L-histidine catabolic process to glutamate and formate"/>
    <property type="evidence" value="ECO:0007669"/>
    <property type="project" value="UniProtKB-UniPathway"/>
</dbReference>
<dbReference type="CDD" id="cd00332">
    <property type="entry name" value="PAL-HAL"/>
    <property type="match status" value="1"/>
</dbReference>
<dbReference type="FunFam" id="1.10.275.10:FF:000005">
    <property type="entry name" value="Histidine ammonia-lyase"/>
    <property type="match status" value="1"/>
</dbReference>
<dbReference type="FunFam" id="1.20.200.10:FF:000003">
    <property type="entry name" value="Histidine ammonia-lyase"/>
    <property type="match status" value="1"/>
</dbReference>
<dbReference type="Gene3D" id="1.20.200.10">
    <property type="entry name" value="Fumarase/aspartase (Central domain)"/>
    <property type="match status" value="1"/>
</dbReference>
<dbReference type="Gene3D" id="1.10.275.10">
    <property type="entry name" value="Fumarase/aspartase (N-terminal domain)"/>
    <property type="match status" value="1"/>
</dbReference>
<dbReference type="HAMAP" id="MF_00229">
    <property type="entry name" value="His_ammonia_lyase"/>
    <property type="match status" value="1"/>
</dbReference>
<dbReference type="InterPro" id="IPR001106">
    <property type="entry name" value="Aromatic_Lyase"/>
</dbReference>
<dbReference type="InterPro" id="IPR024083">
    <property type="entry name" value="Fumarase/histidase_N"/>
</dbReference>
<dbReference type="InterPro" id="IPR005921">
    <property type="entry name" value="HutH"/>
</dbReference>
<dbReference type="InterPro" id="IPR008948">
    <property type="entry name" value="L-Aspartase-like"/>
</dbReference>
<dbReference type="InterPro" id="IPR022313">
    <property type="entry name" value="Phe/His_NH3-lyase_AS"/>
</dbReference>
<dbReference type="NCBIfam" id="TIGR01225">
    <property type="entry name" value="hutH"/>
    <property type="match status" value="1"/>
</dbReference>
<dbReference type="NCBIfam" id="NF006871">
    <property type="entry name" value="PRK09367.1"/>
    <property type="match status" value="1"/>
</dbReference>
<dbReference type="PANTHER" id="PTHR10362">
    <property type="entry name" value="HISTIDINE AMMONIA-LYASE"/>
    <property type="match status" value="1"/>
</dbReference>
<dbReference type="Pfam" id="PF00221">
    <property type="entry name" value="Lyase_aromatic"/>
    <property type="match status" value="1"/>
</dbReference>
<dbReference type="SUPFAM" id="SSF48557">
    <property type="entry name" value="L-aspartase-like"/>
    <property type="match status" value="1"/>
</dbReference>
<dbReference type="PROSITE" id="PS00488">
    <property type="entry name" value="PAL_HISTIDASE"/>
    <property type="match status" value="1"/>
</dbReference>
<protein>
    <recommendedName>
        <fullName evidence="1">Histidine ammonia-lyase</fullName>
        <shortName evidence="1">Histidase</shortName>
        <ecNumber evidence="1">4.3.1.3</ecNumber>
    </recommendedName>
</protein>
<keyword id="KW-0963">Cytoplasm</keyword>
<keyword id="KW-0369">Histidine metabolism</keyword>
<keyword id="KW-0456">Lyase</keyword>
<keyword id="KW-1185">Reference proteome</keyword>
<feature type="chain" id="PRO_1000021563" description="Histidine ammonia-lyase">
    <location>
        <begin position="1"/>
        <end position="513"/>
    </location>
</feature>
<feature type="modified residue" description="2,3-didehydroalanine (Ser)" evidence="1">
    <location>
        <position position="144"/>
    </location>
</feature>
<feature type="cross-link" description="5-imidazolinone (Ala-Gly)" evidence="1">
    <location>
        <begin position="143"/>
        <end position="145"/>
    </location>
</feature>
<name>HUTH_PARDP</name>
<reference key="1">
    <citation type="submission" date="2006-12" db="EMBL/GenBank/DDBJ databases">
        <title>Complete sequence of chromosome 1 of Paracoccus denitrificans PD1222.</title>
        <authorList>
            <person name="Copeland A."/>
            <person name="Lucas S."/>
            <person name="Lapidus A."/>
            <person name="Barry K."/>
            <person name="Detter J.C."/>
            <person name="Glavina del Rio T."/>
            <person name="Hammon N."/>
            <person name="Israni S."/>
            <person name="Dalin E."/>
            <person name="Tice H."/>
            <person name="Pitluck S."/>
            <person name="Munk A.C."/>
            <person name="Brettin T."/>
            <person name="Bruce D."/>
            <person name="Han C."/>
            <person name="Tapia R."/>
            <person name="Gilna P."/>
            <person name="Schmutz J."/>
            <person name="Larimer F."/>
            <person name="Land M."/>
            <person name="Hauser L."/>
            <person name="Kyrpides N."/>
            <person name="Lykidis A."/>
            <person name="Spiro S."/>
            <person name="Richardson D.J."/>
            <person name="Moir J.W.B."/>
            <person name="Ferguson S.J."/>
            <person name="van Spanning R.J.M."/>
            <person name="Richardson P."/>
        </authorList>
    </citation>
    <scope>NUCLEOTIDE SEQUENCE [LARGE SCALE GENOMIC DNA]</scope>
    <source>
        <strain>Pd 1222</strain>
    </source>
</reference>
<proteinExistence type="inferred from homology"/>
<sequence>MSELILIPGETTLAQLEQVWRQGLAVRLADSARPGIAESAARIAAAANGEAPVYGVNTGFGKLASIKIAARDTATLQRNLILSHCCGVGEPVEPETVRLIMVLKLLSLGRGASGVRPEVIQLIEDMLARGVLPVIPSQGSVGASGDLAPLAHMAAAMLGEGRAVHEGREMSSAEALASAGLKPVVLAAKEGLALINGTQVSTAFALAGLFEAFASARAALVTSSLSTDAIMGSTAPFLDEIHTLRGHRGQIVAARTIRALMDGSEIRESHREGDSRVQDPYCIRCQPQVTGACIDLLWQAARTLEIESNAATDNPLVLVGADRIVSGGNFHAEPVAFAADQIALAIAEIGAISQRRIALMVDPALSHDLPPFLTPDPGLNSGLMIAEVTSAALMSENKHLATPCSTDSTPTSANQEDHVSMAAHGARRLKRMNANLAQILGIEALCASAGVEFRAPLATSAPLQAVIAALRQTVPALEQDRYLAPDLAESARLVREGVLVGAIPSHLLDEVRP</sequence>
<accession>A1AZX9</accession>
<organism>
    <name type="scientific">Paracoccus denitrificans (strain Pd 1222)</name>
    <dbReference type="NCBI Taxonomy" id="318586"/>
    <lineage>
        <taxon>Bacteria</taxon>
        <taxon>Pseudomonadati</taxon>
        <taxon>Pseudomonadota</taxon>
        <taxon>Alphaproteobacteria</taxon>
        <taxon>Rhodobacterales</taxon>
        <taxon>Paracoccaceae</taxon>
        <taxon>Paracoccus</taxon>
    </lineage>
</organism>